<protein>
    <recommendedName>
        <fullName evidence="1">Small ribosomal subunit protein uS5</fullName>
    </recommendedName>
    <alternativeName>
        <fullName evidence="2">30S ribosomal protein S5</fullName>
    </alternativeName>
</protein>
<sequence length="178" mass="19182">METQGVMKEIQYEEFEEKIIEIRRTSKVTKGGKNLSFRVVAIVGNKNGKVGLGIGKAREVPEAIRKAISAAKRNIIEVPVINGTIPHEIIGRQDASKVLLRPAAPGTGIIAGGTVRAVVELAGIQNILTKSLGSTNPLNLALATMNGLKNLLDPRKVAKLRDISVEEVFKGVRREDNA</sequence>
<evidence type="ECO:0000255" key="1">
    <source>
        <dbReference type="HAMAP-Rule" id="MF_01307"/>
    </source>
</evidence>
<evidence type="ECO:0000305" key="2"/>
<organism>
    <name type="scientific">Thermotoga petrophila (strain ATCC BAA-488 / DSM 13995 / JCM 10881 / RKU-1)</name>
    <dbReference type="NCBI Taxonomy" id="390874"/>
    <lineage>
        <taxon>Bacteria</taxon>
        <taxon>Thermotogati</taxon>
        <taxon>Thermotogota</taxon>
        <taxon>Thermotogae</taxon>
        <taxon>Thermotogales</taxon>
        <taxon>Thermotogaceae</taxon>
        <taxon>Thermotoga</taxon>
    </lineage>
</organism>
<dbReference type="EMBL" id="CP000702">
    <property type="protein sequence ID" value="ABQ47323.1"/>
    <property type="molecule type" value="Genomic_DNA"/>
</dbReference>
<dbReference type="SMR" id="A5IMA0"/>
<dbReference type="STRING" id="390874.Tpet_1309"/>
<dbReference type="KEGG" id="tpt:Tpet_1309"/>
<dbReference type="eggNOG" id="COG0098">
    <property type="taxonomic scope" value="Bacteria"/>
</dbReference>
<dbReference type="HOGENOM" id="CLU_065898_2_2_0"/>
<dbReference type="Proteomes" id="UP000006558">
    <property type="component" value="Chromosome"/>
</dbReference>
<dbReference type="GO" id="GO:0015935">
    <property type="term" value="C:small ribosomal subunit"/>
    <property type="evidence" value="ECO:0007669"/>
    <property type="project" value="InterPro"/>
</dbReference>
<dbReference type="GO" id="GO:0019843">
    <property type="term" value="F:rRNA binding"/>
    <property type="evidence" value="ECO:0007669"/>
    <property type="project" value="UniProtKB-UniRule"/>
</dbReference>
<dbReference type="GO" id="GO:0003735">
    <property type="term" value="F:structural constituent of ribosome"/>
    <property type="evidence" value="ECO:0007669"/>
    <property type="project" value="InterPro"/>
</dbReference>
<dbReference type="GO" id="GO:0006412">
    <property type="term" value="P:translation"/>
    <property type="evidence" value="ECO:0007669"/>
    <property type="project" value="UniProtKB-UniRule"/>
</dbReference>
<dbReference type="FunFam" id="3.30.160.20:FF:000001">
    <property type="entry name" value="30S ribosomal protein S5"/>
    <property type="match status" value="1"/>
</dbReference>
<dbReference type="FunFam" id="3.30.230.10:FF:000002">
    <property type="entry name" value="30S ribosomal protein S5"/>
    <property type="match status" value="1"/>
</dbReference>
<dbReference type="Gene3D" id="3.30.160.20">
    <property type="match status" value="1"/>
</dbReference>
<dbReference type="Gene3D" id="3.30.230.10">
    <property type="match status" value="1"/>
</dbReference>
<dbReference type="HAMAP" id="MF_01307_B">
    <property type="entry name" value="Ribosomal_uS5_B"/>
    <property type="match status" value="1"/>
</dbReference>
<dbReference type="InterPro" id="IPR020568">
    <property type="entry name" value="Ribosomal_Su5_D2-typ_SF"/>
</dbReference>
<dbReference type="InterPro" id="IPR000851">
    <property type="entry name" value="Ribosomal_uS5"/>
</dbReference>
<dbReference type="InterPro" id="IPR005712">
    <property type="entry name" value="Ribosomal_uS5_bac-type"/>
</dbReference>
<dbReference type="InterPro" id="IPR005324">
    <property type="entry name" value="Ribosomal_uS5_C"/>
</dbReference>
<dbReference type="InterPro" id="IPR013810">
    <property type="entry name" value="Ribosomal_uS5_N"/>
</dbReference>
<dbReference type="InterPro" id="IPR018192">
    <property type="entry name" value="Ribosomal_uS5_N_CS"/>
</dbReference>
<dbReference type="InterPro" id="IPR014721">
    <property type="entry name" value="Ribsml_uS5_D2-typ_fold_subgr"/>
</dbReference>
<dbReference type="NCBIfam" id="TIGR01021">
    <property type="entry name" value="rpsE_bact"/>
    <property type="match status" value="1"/>
</dbReference>
<dbReference type="PANTHER" id="PTHR48277">
    <property type="entry name" value="MITOCHONDRIAL RIBOSOMAL PROTEIN S5"/>
    <property type="match status" value="1"/>
</dbReference>
<dbReference type="PANTHER" id="PTHR48277:SF1">
    <property type="entry name" value="MITOCHONDRIAL RIBOSOMAL PROTEIN S5"/>
    <property type="match status" value="1"/>
</dbReference>
<dbReference type="Pfam" id="PF00333">
    <property type="entry name" value="Ribosomal_S5"/>
    <property type="match status" value="1"/>
</dbReference>
<dbReference type="Pfam" id="PF03719">
    <property type="entry name" value="Ribosomal_S5_C"/>
    <property type="match status" value="1"/>
</dbReference>
<dbReference type="SUPFAM" id="SSF54768">
    <property type="entry name" value="dsRNA-binding domain-like"/>
    <property type="match status" value="1"/>
</dbReference>
<dbReference type="SUPFAM" id="SSF54211">
    <property type="entry name" value="Ribosomal protein S5 domain 2-like"/>
    <property type="match status" value="1"/>
</dbReference>
<dbReference type="PROSITE" id="PS00585">
    <property type="entry name" value="RIBOSOMAL_S5"/>
    <property type="match status" value="1"/>
</dbReference>
<dbReference type="PROSITE" id="PS50881">
    <property type="entry name" value="S5_DSRBD"/>
    <property type="match status" value="1"/>
</dbReference>
<proteinExistence type="inferred from homology"/>
<keyword id="KW-0687">Ribonucleoprotein</keyword>
<keyword id="KW-0689">Ribosomal protein</keyword>
<keyword id="KW-0694">RNA-binding</keyword>
<keyword id="KW-0699">rRNA-binding</keyword>
<feature type="chain" id="PRO_0000323223" description="Small ribosomal subunit protein uS5">
    <location>
        <begin position="1"/>
        <end position="178"/>
    </location>
</feature>
<feature type="domain" description="S5 DRBM" evidence="1">
    <location>
        <begin position="15"/>
        <end position="78"/>
    </location>
</feature>
<accession>A5IMA0</accession>
<name>RS5_THEP1</name>
<comment type="function">
    <text evidence="1">With S4 and S12 plays an important role in translational accuracy.</text>
</comment>
<comment type="function">
    <text evidence="1">Located at the back of the 30S subunit body where it stabilizes the conformation of the head with respect to the body.</text>
</comment>
<comment type="subunit">
    <text evidence="1">Part of the 30S ribosomal subunit. Contacts proteins S4 and S8.</text>
</comment>
<comment type="domain">
    <text>The N-terminal domain interacts with the head of the 30S subunit; the C-terminal domain interacts with the body and contacts protein S4. The interaction surface between S4 and S5 is involved in control of translational fidelity.</text>
</comment>
<comment type="similarity">
    <text evidence="1">Belongs to the universal ribosomal protein uS5 family.</text>
</comment>
<reference key="1">
    <citation type="submission" date="2007-05" db="EMBL/GenBank/DDBJ databases">
        <title>Complete sequence of Thermotoga petrophila RKU-1.</title>
        <authorList>
            <consortium name="US DOE Joint Genome Institute"/>
            <person name="Copeland A."/>
            <person name="Lucas S."/>
            <person name="Lapidus A."/>
            <person name="Barry K."/>
            <person name="Glavina del Rio T."/>
            <person name="Dalin E."/>
            <person name="Tice H."/>
            <person name="Pitluck S."/>
            <person name="Sims D."/>
            <person name="Brettin T."/>
            <person name="Bruce D."/>
            <person name="Detter J.C."/>
            <person name="Han C."/>
            <person name="Tapia R."/>
            <person name="Schmutz J."/>
            <person name="Larimer F."/>
            <person name="Land M."/>
            <person name="Hauser L."/>
            <person name="Kyrpides N."/>
            <person name="Mikhailova N."/>
            <person name="Nelson K."/>
            <person name="Gogarten J.P."/>
            <person name="Noll K."/>
            <person name="Richardson P."/>
        </authorList>
    </citation>
    <scope>NUCLEOTIDE SEQUENCE [LARGE SCALE GENOMIC DNA]</scope>
    <source>
        <strain>ATCC BAA-488 / DSM 13995 / JCM 10881 / RKU-1</strain>
    </source>
</reference>
<gene>
    <name evidence="1" type="primary">rpsE</name>
    <name type="ordered locus">Tpet_1309</name>
</gene>